<evidence type="ECO:0000255" key="1">
    <source>
        <dbReference type="HAMAP-Rule" id="MF_00095"/>
    </source>
</evidence>
<name>SFSA_MOOTA</name>
<reference key="1">
    <citation type="journal article" date="2008" name="Environ. Microbiol.">
        <title>The complete genome sequence of Moorella thermoacetica (f. Clostridium thermoaceticum).</title>
        <authorList>
            <person name="Pierce E."/>
            <person name="Xie G."/>
            <person name="Barabote R.D."/>
            <person name="Saunders E."/>
            <person name="Han C.S."/>
            <person name="Detter J.C."/>
            <person name="Richardson P."/>
            <person name="Brettin T.S."/>
            <person name="Das A."/>
            <person name="Ljungdahl L.G."/>
            <person name="Ragsdale S.W."/>
        </authorList>
    </citation>
    <scope>NUCLEOTIDE SEQUENCE [LARGE SCALE GENOMIC DNA]</scope>
    <source>
        <strain>ATCC 39073 / JCM 9320</strain>
    </source>
</reference>
<sequence>MVELPANLIKATFLSRPNRFTVVAAREGEKLVAFLADPGRLTELLLPGAEVYLAPASRQGDRKTAYDVVLLRQNGTFISLDSRLPNRLFAAALQAGSLEPFKGYRLRATEVRAGSSRLDFLLQGDGHPPCYVEVKSVTLVRGGLALFPDAPTARGSRHLRELMALHSRGYRAAAVFIIQREDAISLAPNEVTDPCFSSTIREAAAAGVEIYAYRCHIDPVTVSLIAPVMVKL</sequence>
<comment type="similarity">
    <text evidence="1">Belongs to the SfsA family.</text>
</comment>
<gene>
    <name evidence="1" type="primary">sfsA</name>
    <name type="ordered locus">Moth_0431</name>
</gene>
<proteinExistence type="inferred from homology"/>
<dbReference type="EMBL" id="CP000232">
    <property type="protein sequence ID" value="ABC18762.1"/>
    <property type="molecule type" value="Genomic_DNA"/>
</dbReference>
<dbReference type="RefSeq" id="YP_429305.1">
    <property type="nucleotide sequence ID" value="NC_007644.1"/>
</dbReference>
<dbReference type="SMR" id="Q2RLC7"/>
<dbReference type="STRING" id="264732.Moth_0431"/>
<dbReference type="EnsemblBacteria" id="ABC18762">
    <property type="protein sequence ID" value="ABC18762"/>
    <property type="gene ID" value="Moth_0431"/>
</dbReference>
<dbReference type="KEGG" id="mta:Moth_0431"/>
<dbReference type="PATRIC" id="fig|264732.11.peg.465"/>
<dbReference type="eggNOG" id="COG1489">
    <property type="taxonomic scope" value="Bacteria"/>
</dbReference>
<dbReference type="HOGENOM" id="CLU_052299_1_0_9"/>
<dbReference type="OrthoDB" id="9802365at2"/>
<dbReference type="GO" id="GO:0003677">
    <property type="term" value="F:DNA binding"/>
    <property type="evidence" value="ECO:0007669"/>
    <property type="project" value="InterPro"/>
</dbReference>
<dbReference type="CDD" id="cd22359">
    <property type="entry name" value="SfsA-like_bacterial"/>
    <property type="match status" value="1"/>
</dbReference>
<dbReference type="Gene3D" id="2.40.50.580">
    <property type="match status" value="1"/>
</dbReference>
<dbReference type="Gene3D" id="3.40.1350.60">
    <property type="match status" value="1"/>
</dbReference>
<dbReference type="HAMAP" id="MF_00095">
    <property type="entry name" value="SfsA"/>
    <property type="match status" value="1"/>
</dbReference>
<dbReference type="InterPro" id="IPR005224">
    <property type="entry name" value="SfsA"/>
</dbReference>
<dbReference type="InterPro" id="IPR040452">
    <property type="entry name" value="SfsA_C"/>
</dbReference>
<dbReference type="InterPro" id="IPR041465">
    <property type="entry name" value="SfsA_N"/>
</dbReference>
<dbReference type="NCBIfam" id="TIGR00230">
    <property type="entry name" value="sfsA"/>
    <property type="match status" value="1"/>
</dbReference>
<dbReference type="PANTHER" id="PTHR30545">
    <property type="entry name" value="SUGAR FERMENTATION STIMULATION PROTEIN A"/>
    <property type="match status" value="1"/>
</dbReference>
<dbReference type="PANTHER" id="PTHR30545:SF2">
    <property type="entry name" value="SUGAR FERMENTATION STIMULATION PROTEIN A"/>
    <property type="match status" value="1"/>
</dbReference>
<dbReference type="Pfam" id="PF03749">
    <property type="entry name" value="SfsA"/>
    <property type="match status" value="1"/>
</dbReference>
<dbReference type="Pfam" id="PF17746">
    <property type="entry name" value="SfsA_N"/>
    <property type="match status" value="1"/>
</dbReference>
<organism>
    <name type="scientific">Moorella thermoacetica (strain ATCC 39073 / JCM 9320)</name>
    <dbReference type="NCBI Taxonomy" id="264732"/>
    <lineage>
        <taxon>Bacteria</taxon>
        <taxon>Bacillati</taxon>
        <taxon>Bacillota</taxon>
        <taxon>Clostridia</taxon>
        <taxon>Moorellales</taxon>
        <taxon>Moorellaceae</taxon>
        <taxon>Moorella</taxon>
    </lineage>
</organism>
<accession>Q2RLC7</accession>
<protein>
    <recommendedName>
        <fullName evidence="1">Sugar fermentation stimulation protein homolog</fullName>
    </recommendedName>
</protein>
<feature type="chain" id="PRO_0000340146" description="Sugar fermentation stimulation protein homolog">
    <location>
        <begin position="1"/>
        <end position="232"/>
    </location>
</feature>